<name>TRUA_NOSS1</name>
<gene>
    <name evidence="1" type="primary">truA</name>
    <name type="ordered locus">all4189</name>
</gene>
<feature type="chain" id="PRO_0000057316" description="tRNA pseudouridine synthase A">
    <location>
        <begin position="1"/>
        <end position="282"/>
    </location>
</feature>
<feature type="active site" description="Nucleophile" evidence="1">
    <location>
        <position position="61"/>
    </location>
</feature>
<feature type="binding site" evidence="1">
    <location>
        <position position="119"/>
    </location>
    <ligand>
        <name>substrate</name>
    </ligand>
</feature>
<reference key="1">
    <citation type="journal article" date="2001" name="DNA Res.">
        <title>Complete genomic sequence of the filamentous nitrogen-fixing cyanobacterium Anabaena sp. strain PCC 7120.</title>
        <authorList>
            <person name="Kaneko T."/>
            <person name="Nakamura Y."/>
            <person name="Wolk C.P."/>
            <person name="Kuritz T."/>
            <person name="Sasamoto S."/>
            <person name="Watanabe A."/>
            <person name="Iriguchi M."/>
            <person name="Ishikawa A."/>
            <person name="Kawashima K."/>
            <person name="Kimura T."/>
            <person name="Kishida Y."/>
            <person name="Kohara M."/>
            <person name="Matsumoto M."/>
            <person name="Matsuno A."/>
            <person name="Muraki A."/>
            <person name="Nakazaki N."/>
            <person name="Shimpo S."/>
            <person name="Sugimoto M."/>
            <person name="Takazawa M."/>
            <person name="Yamada M."/>
            <person name="Yasuda M."/>
            <person name="Tabata S."/>
        </authorList>
    </citation>
    <scope>NUCLEOTIDE SEQUENCE [LARGE SCALE GENOMIC DNA]</scope>
    <source>
        <strain>PCC 7120 / SAG 25.82 / UTEX 2576</strain>
    </source>
</reference>
<keyword id="KW-0413">Isomerase</keyword>
<keyword id="KW-1185">Reference proteome</keyword>
<keyword id="KW-0819">tRNA processing</keyword>
<accession>Q8YPK5</accession>
<organism>
    <name type="scientific">Nostoc sp. (strain PCC 7120 / SAG 25.82 / UTEX 2576)</name>
    <dbReference type="NCBI Taxonomy" id="103690"/>
    <lineage>
        <taxon>Bacteria</taxon>
        <taxon>Bacillati</taxon>
        <taxon>Cyanobacteriota</taxon>
        <taxon>Cyanophyceae</taxon>
        <taxon>Nostocales</taxon>
        <taxon>Nostocaceae</taxon>
        <taxon>Nostoc</taxon>
    </lineage>
</organism>
<evidence type="ECO:0000255" key="1">
    <source>
        <dbReference type="HAMAP-Rule" id="MF_00171"/>
    </source>
</evidence>
<proteinExistence type="inferred from homology"/>
<sequence>MLDSHQPKQTQRVALVVQYLGTHFHGWQRQKQHRTVQEEIETAIAKILGHHVTLHGAGRTDSGVHAAAQVAHFDATGLIPAHKWASVINSYLPKDILIKASAAVGDRWHARFSAAYRRYRYTIYTEDRPNLFVTPFSWHYYYAPLDESLMQAALKPLMGKHHLAAFHRAGSKRSHSWVEVQAVECHRSGPFIHIEIQADGFLYGMVRLLVGMLVQVGSGQRTLANFTELWKEQRREEVKHAAPSQGLCLLRVGYPDFPFTPDVWYDTMPKLVFSQESLVNSH</sequence>
<protein>
    <recommendedName>
        <fullName evidence="1">tRNA pseudouridine synthase A</fullName>
        <ecNumber evidence="1">5.4.99.12</ecNumber>
    </recommendedName>
    <alternativeName>
        <fullName evidence="1">tRNA pseudouridine(38-40) synthase</fullName>
    </alternativeName>
    <alternativeName>
        <fullName evidence="1">tRNA pseudouridylate synthase I</fullName>
    </alternativeName>
    <alternativeName>
        <fullName evidence="1">tRNA-uridine isomerase I</fullName>
    </alternativeName>
</protein>
<dbReference type="EC" id="5.4.99.12" evidence="1"/>
<dbReference type="EMBL" id="BA000019">
    <property type="protein sequence ID" value="BAB75888.1"/>
    <property type="molecule type" value="Genomic_DNA"/>
</dbReference>
<dbReference type="PIR" id="AF2329">
    <property type="entry name" value="AF2329"/>
</dbReference>
<dbReference type="RefSeq" id="WP_010998328.1">
    <property type="nucleotide sequence ID" value="NZ_RSCN01000010.1"/>
</dbReference>
<dbReference type="SMR" id="Q8YPK5"/>
<dbReference type="STRING" id="103690.gene:10496238"/>
<dbReference type="KEGG" id="ana:all4189"/>
<dbReference type="eggNOG" id="COG0101">
    <property type="taxonomic scope" value="Bacteria"/>
</dbReference>
<dbReference type="OrthoDB" id="9811823at2"/>
<dbReference type="Proteomes" id="UP000002483">
    <property type="component" value="Chromosome"/>
</dbReference>
<dbReference type="GO" id="GO:0003723">
    <property type="term" value="F:RNA binding"/>
    <property type="evidence" value="ECO:0007669"/>
    <property type="project" value="InterPro"/>
</dbReference>
<dbReference type="GO" id="GO:0160147">
    <property type="term" value="F:tRNA pseudouridine(38-40) synthase activity"/>
    <property type="evidence" value="ECO:0007669"/>
    <property type="project" value="UniProtKB-EC"/>
</dbReference>
<dbReference type="GO" id="GO:0031119">
    <property type="term" value="P:tRNA pseudouridine synthesis"/>
    <property type="evidence" value="ECO:0007669"/>
    <property type="project" value="UniProtKB-UniRule"/>
</dbReference>
<dbReference type="CDD" id="cd02570">
    <property type="entry name" value="PseudoU_synth_EcTruA"/>
    <property type="match status" value="1"/>
</dbReference>
<dbReference type="FunFam" id="3.30.70.580:FF:000001">
    <property type="entry name" value="tRNA pseudouridine synthase A"/>
    <property type="match status" value="1"/>
</dbReference>
<dbReference type="Gene3D" id="3.30.70.660">
    <property type="entry name" value="Pseudouridine synthase I, catalytic domain, C-terminal subdomain"/>
    <property type="match status" value="1"/>
</dbReference>
<dbReference type="Gene3D" id="3.30.70.580">
    <property type="entry name" value="Pseudouridine synthase I, catalytic domain, N-terminal subdomain"/>
    <property type="match status" value="1"/>
</dbReference>
<dbReference type="HAMAP" id="MF_00171">
    <property type="entry name" value="TruA"/>
    <property type="match status" value="1"/>
</dbReference>
<dbReference type="InterPro" id="IPR020103">
    <property type="entry name" value="PsdUridine_synth_cat_dom_sf"/>
</dbReference>
<dbReference type="InterPro" id="IPR001406">
    <property type="entry name" value="PsdUridine_synth_TruA"/>
</dbReference>
<dbReference type="InterPro" id="IPR020097">
    <property type="entry name" value="PsdUridine_synth_TruA_a/b_dom"/>
</dbReference>
<dbReference type="InterPro" id="IPR020095">
    <property type="entry name" value="PsdUridine_synth_TruA_C"/>
</dbReference>
<dbReference type="InterPro" id="IPR020094">
    <property type="entry name" value="TruA/RsuA/RluB/E/F_N"/>
</dbReference>
<dbReference type="NCBIfam" id="TIGR00071">
    <property type="entry name" value="hisT_truA"/>
    <property type="match status" value="1"/>
</dbReference>
<dbReference type="PANTHER" id="PTHR11142">
    <property type="entry name" value="PSEUDOURIDYLATE SYNTHASE"/>
    <property type="match status" value="1"/>
</dbReference>
<dbReference type="PANTHER" id="PTHR11142:SF0">
    <property type="entry name" value="TRNA PSEUDOURIDINE SYNTHASE-LIKE 1"/>
    <property type="match status" value="1"/>
</dbReference>
<dbReference type="Pfam" id="PF01416">
    <property type="entry name" value="PseudoU_synth_1"/>
    <property type="match status" value="2"/>
</dbReference>
<dbReference type="PIRSF" id="PIRSF001430">
    <property type="entry name" value="tRNA_psdUrid_synth"/>
    <property type="match status" value="1"/>
</dbReference>
<dbReference type="SUPFAM" id="SSF55120">
    <property type="entry name" value="Pseudouridine synthase"/>
    <property type="match status" value="1"/>
</dbReference>
<comment type="function">
    <text evidence="1">Formation of pseudouridine at positions 38, 39 and 40 in the anticodon stem and loop of transfer RNAs.</text>
</comment>
<comment type="catalytic activity">
    <reaction evidence="1">
        <text>uridine(38/39/40) in tRNA = pseudouridine(38/39/40) in tRNA</text>
        <dbReference type="Rhea" id="RHEA:22376"/>
        <dbReference type="Rhea" id="RHEA-COMP:10085"/>
        <dbReference type="Rhea" id="RHEA-COMP:10087"/>
        <dbReference type="ChEBI" id="CHEBI:65314"/>
        <dbReference type="ChEBI" id="CHEBI:65315"/>
        <dbReference type="EC" id="5.4.99.12"/>
    </reaction>
</comment>
<comment type="subunit">
    <text evidence="1">Homodimer.</text>
</comment>
<comment type="similarity">
    <text evidence="1">Belongs to the tRNA pseudouridine synthase TruA family.</text>
</comment>